<organism>
    <name type="scientific">Mycobacterium avium (strain 104)</name>
    <dbReference type="NCBI Taxonomy" id="243243"/>
    <lineage>
        <taxon>Bacteria</taxon>
        <taxon>Bacillati</taxon>
        <taxon>Actinomycetota</taxon>
        <taxon>Actinomycetes</taxon>
        <taxon>Mycobacteriales</taxon>
        <taxon>Mycobacteriaceae</taxon>
        <taxon>Mycobacterium</taxon>
        <taxon>Mycobacterium avium complex (MAC)</taxon>
    </lineage>
</organism>
<reference key="1">
    <citation type="submission" date="2006-10" db="EMBL/GenBank/DDBJ databases">
        <authorList>
            <person name="Fleischmann R.D."/>
            <person name="Dodson R.J."/>
            <person name="Haft D.H."/>
            <person name="Merkel J.S."/>
            <person name="Nelson W.C."/>
            <person name="Fraser C.M."/>
        </authorList>
    </citation>
    <scope>NUCLEOTIDE SEQUENCE [LARGE SCALE GENOMIC DNA]</scope>
    <source>
        <strain>104</strain>
    </source>
</reference>
<keyword id="KW-0067">ATP-binding</keyword>
<keyword id="KW-0963">Cytoplasm</keyword>
<keyword id="KW-0418">Kinase</keyword>
<keyword id="KW-0547">Nucleotide-binding</keyword>
<keyword id="KW-0808">Transferase</keyword>
<dbReference type="EC" id="2.7.4.25" evidence="1"/>
<dbReference type="EMBL" id="CP000479">
    <property type="protein sequence ID" value="ABK68125.1"/>
    <property type="molecule type" value="Genomic_DNA"/>
</dbReference>
<dbReference type="RefSeq" id="WP_011725229.1">
    <property type="nucleotide sequence ID" value="NC_008595.1"/>
</dbReference>
<dbReference type="SMR" id="A0QH60"/>
<dbReference type="KEGG" id="mav:MAV_3064"/>
<dbReference type="HOGENOM" id="CLU_079959_0_0_11"/>
<dbReference type="Proteomes" id="UP000001574">
    <property type="component" value="Chromosome"/>
</dbReference>
<dbReference type="GO" id="GO:0005829">
    <property type="term" value="C:cytosol"/>
    <property type="evidence" value="ECO:0007669"/>
    <property type="project" value="TreeGrafter"/>
</dbReference>
<dbReference type="GO" id="GO:0005524">
    <property type="term" value="F:ATP binding"/>
    <property type="evidence" value="ECO:0007669"/>
    <property type="project" value="UniProtKB-UniRule"/>
</dbReference>
<dbReference type="GO" id="GO:0036430">
    <property type="term" value="F:CMP kinase activity"/>
    <property type="evidence" value="ECO:0007669"/>
    <property type="project" value="RHEA"/>
</dbReference>
<dbReference type="GO" id="GO:0036431">
    <property type="term" value="F:dCMP kinase activity"/>
    <property type="evidence" value="ECO:0007669"/>
    <property type="project" value="RHEA"/>
</dbReference>
<dbReference type="GO" id="GO:0015949">
    <property type="term" value="P:nucleobase-containing small molecule interconversion"/>
    <property type="evidence" value="ECO:0007669"/>
    <property type="project" value="TreeGrafter"/>
</dbReference>
<dbReference type="GO" id="GO:0006220">
    <property type="term" value="P:pyrimidine nucleotide metabolic process"/>
    <property type="evidence" value="ECO:0007669"/>
    <property type="project" value="UniProtKB-UniRule"/>
</dbReference>
<dbReference type="CDD" id="cd02020">
    <property type="entry name" value="CMPK"/>
    <property type="match status" value="1"/>
</dbReference>
<dbReference type="Gene3D" id="3.40.50.300">
    <property type="entry name" value="P-loop containing nucleotide triphosphate hydrolases"/>
    <property type="match status" value="1"/>
</dbReference>
<dbReference type="HAMAP" id="MF_00238">
    <property type="entry name" value="Cytidyl_kinase_type1"/>
    <property type="match status" value="1"/>
</dbReference>
<dbReference type="InterPro" id="IPR003136">
    <property type="entry name" value="Cytidylate_kin"/>
</dbReference>
<dbReference type="InterPro" id="IPR011994">
    <property type="entry name" value="Cytidylate_kinase_dom"/>
</dbReference>
<dbReference type="InterPro" id="IPR027417">
    <property type="entry name" value="P-loop_NTPase"/>
</dbReference>
<dbReference type="NCBIfam" id="TIGR00017">
    <property type="entry name" value="cmk"/>
    <property type="match status" value="1"/>
</dbReference>
<dbReference type="PANTHER" id="PTHR21299:SF2">
    <property type="entry name" value="CYTIDYLATE KINASE"/>
    <property type="match status" value="1"/>
</dbReference>
<dbReference type="PANTHER" id="PTHR21299">
    <property type="entry name" value="CYTIDYLATE KINASE/PANTOATE-BETA-ALANINE LIGASE"/>
    <property type="match status" value="1"/>
</dbReference>
<dbReference type="Pfam" id="PF02224">
    <property type="entry name" value="Cytidylate_kin"/>
    <property type="match status" value="1"/>
</dbReference>
<dbReference type="SUPFAM" id="SSF52540">
    <property type="entry name" value="P-loop containing nucleoside triphosphate hydrolases"/>
    <property type="match status" value="1"/>
</dbReference>
<proteinExistence type="inferred from homology"/>
<comment type="catalytic activity">
    <reaction evidence="1">
        <text>CMP + ATP = CDP + ADP</text>
        <dbReference type="Rhea" id="RHEA:11600"/>
        <dbReference type="ChEBI" id="CHEBI:30616"/>
        <dbReference type="ChEBI" id="CHEBI:58069"/>
        <dbReference type="ChEBI" id="CHEBI:60377"/>
        <dbReference type="ChEBI" id="CHEBI:456216"/>
        <dbReference type="EC" id="2.7.4.25"/>
    </reaction>
</comment>
<comment type="catalytic activity">
    <reaction evidence="1">
        <text>dCMP + ATP = dCDP + ADP</text>
        <dbReference type="Rhea" id="RHEA:25094"/>
        <dbReference type="ChEBI" id="CHEBI:30616"/>
        <dbReference type="ChEBI" id="CHEBI:57566"/>
        <dbReference type="ChEBI" id="CHEBI:58593"/>
        <dbReference type="ChEBI" id="CHEBI:456216"/>
        <dbReference type="EC" id="2.7.4.25"/>
    </reaction>
</comment>
<comment type="subcellular location">
    <subcellularLocation>
        <location evidence="1">Cytoplasm</location>
    </subcellularLocation>
</comment>
<comment type="similarity">
    <text evidence="1">Belongs to the cytidylate kinase family. Type 1 subfamily.</text>
</comment>
<gene>
    <name evidence="1" type="primary">cmk</name>
    <name type="ordered locus">MAV_3064</name>
</gene>
<protein>
    <recommendedName>
        <fullName evidence="1">Cytidylate kinase</fullName>
        <shortName evidence="1">CK</shortName>
        <ecNumber evidence="1">2.7.4.25</ecNumber>
    </recommendedName>
    <alternativeName>
        <fullName evidence="1">Cytidine monophosphate kinase</fullName>
        <shortName evidence="1">CMP kinase</shortName>
    </alternativeName>
</protein>
<evidence type="ECO:0000255" key="1">
    <source>
        <dbReference type="HAMAP-Rule" id="MF_00238"/>
    </source>
</evidence>
<feature type="chain" id="PRO_1000048233" description="Cytidylate kinase">
    <location>
        <begin position="1"/>
        <end position="228"/>
    </location>
</feature>
<feature type="binding site" evidence="1">
    <location>
        <begin position="11"/>
        <end position="19"/>
    </location>
    <ligand>
        <name>ATP</name>
        <dbReference type="ChEBI" id="CHEBI:30616"/>
    </ligand>
</feature>
<name>KCY_MYCA1</name>
<sequence>MSADVVVAIDGPAGTGKSSVSKGLARALGARYLDTGGMYRMVTLAVLRAGIDPADADAVGRAAQAVRMSVDYHPDGDRYFLGGEDVSTEIRGDKVTAAVSAVSSIPAVRTRLVGLQREMASGPGSIVVEGRDIGTVVLPDAPVKIFLTASAETRARRRNDQNVAAGLADDYEAVLAEVRRRDHLDSTRRVSPLRAAPDAVVVDTSDMTEAQVIDHLRDLVRQRSEVAR</sequence>
<accession>A0QH60</accession>